<name>GALT9_MACFA</name>
<reference key="1">
    <citation type="submission" date="2000-10" db="EMBL/GenBank/DDBJ databases">
        <title>Isolation of full-length cDNA clones from macaque brain cDNA libraries.</title>
        <authorList>
            <person name="Osada N."/>
            <person name="Hida M."/>
            <person name="Kusuda J."/>
            <person name="Tanuma R."/>
            <person name="Iseki K."/>
            <person name="Hirai M."/>
            <person name="Terao K."/>
            <person name="Suzuki Y."/>
            <person name="Sugano S."/>
            <person name="Hashimoto K."/>
        </authorList>
    </citation>
    <scope>NUCLEOTIDE SEQUENCE [LARGE SCALE MRNA]</scope>
    <source>
        <tissue>Parietal cortex</tissue>
    </source>
</reference>
<evidence type="ECO:0000250" key="1"/>
<evidence type="ECO:0000250" key="2">
    <source>
        <dbReference type="UniProtKB" id="Q9HCQ5"/>
    </source>
</evidence>
<evidence type="ECO:0000255" key="3"/>
<evidence type="ECO:0000255" key="4">
    <source>
        <dbReference type="PROSITE-ProRule" id="PRU00174"/>
    </source>
</evidence>
<evidence type="ECO:0000256" key="5">
    <source>
        <dbReference type="SAM" id="MobiDB-lite"/>
    </source>
</evidence>
<evidence type="ECO:0000305" key="6"/>
<feature type="chain" id="PRO_0000059121" description="Polypeptide N-acetylgalactosaminyltransferase 9">
    <location>
        <begin position="1"/>
        <end position="606"/>
    </location>
</feature>
<feature type="topological domain" description="Cytoplasmic" evidence="3">
    <location>
        <begin position="1"/>
        <end position="6"/>
    </location>
</feature>
<feature type="transmembrane region" description="Helical; Signal-anchor for type II membrane protein">
    <location>
        <begin position="7"/>
        <end position="29"/>
    </location>
</feature>
<feature type="topological domain" description="Lumenal" evidence="3">
    <location>
        <begin position="30"/>
        <end position="606"/>
    </location>
</feature>
<feature type="domain" description="Ricin B-type lectin" evidence="4">
    <location>
        <begin position="467"/>
        <end position="603"/>
    </location>
</feature>
<feature type="region of interest" description="Disordered" evidence="5">
    <location>
        <begin position="43"/>
        <end position="62"/>
    </location>
</feature>
<feature type="region of interest" description="Catalytic subdomain A">
    <location>
        <begin position="153"/>
        <end position="264"/>
    </location>
</feature>
<feature type="region of interest" description="Catalytic subdomain B">
    <location>
        <begin position="321"/>
        <end position="383"/>
    </location>
</feature>
<feature type="binding site" evidence="1">
    <location>
        <position position="194"/>
    </location>
    <ligand>
        <name>substrate</name>
    </ligand>
</feature>
<feature type="binding site" evidence="1">
    <location>
        <position position="225"/>
    </location>
    <ligand>
        <name>substrate</name>
    </ligand>
</feature>
<feature type="binding site" evidence="1">
    <location>
        <position position="248"/>
    </location>
    <ligand>
        <name>Mn(2+)</name>
        <dbReference type="ChEBI" id="CHEBI:29035"/>
    </ligand>
</feature>
<feature type="binding site" evidence="1">
    <location>
        <position position="250"/>
    </location>
    <ligand>
        <name>Mn(2+)</name>
        <dbReference type="ChEBI" id="CHEBI:29035"/>
    </ligand>
</feature>
<feature type="binding site" evidence="1">
    <location>
        <position position="380"/>
    </location>
    <ligand>
        <name>Mn(2+)</name>
        <dbReference type="ChEBI" id="CHEBI:29035"/>
    </ligand>
</feature>
<feature type="binding site" evidence="1">
    <location>
        <position position="383"/>
    </location>
    <ligand>
        <name>substrate</name>
    </ligand>
</feature>
<feature type="binding site" evidence="1">
    <location>
        <position position="388"/>
    </location>
    <ligand>
        <name>substrate</name>
    </ligand>
</feature>
<feature type="glycosylation site" description="N-linked (GlcNAc...) asparagine" evidence="3">
    <location>
        <position position="463"/>
    </location>
</feature>
<feature type="disulfide bond" evidence="4">
    <location>
        <begin position="144"/>
        <end position="375"/>
    </location>
</feature>
<feature type="disulfide bond" evidence="4">
    <location>
        <begin position="366"/>
        <end position="445"/>
    </location>
</feature>
<feature type="disulfide bond" evidence="4">
    <location>
        <begin position="480"/>
        <end position="496"/>
    </location>
</feature>
<feature type="disulfide bond" evidence="4">
    <location>
        <begin position="528"/>
        <end position="543"/>
    </location>
</feature>
<feature type="disulfide bond" evidence="4">
    <location>
        <begin position="570"/>
        <end position="590"/>
    </location>
</feature>
<organism>
    <name type="scientific">Macaca fascicularis</name>
    <name type="common">Crab-eating macaque</name>
    <name type="synonym">Cynomolgus monkey</name>
    <dbReference type="NCBI Taxonomy" id="9541"/>
    <lineage>
        <taxon>Eukaryota</taxon>
        <taxon>Metazoa</taxon>
        <taxon>Chordata</taxon>
        <taxon>Craniata</taxon>
        <taxon>Vertebrata</taxon>
        <taxon>Euteleostomi</taxon>
        <taxon>Mammalia</taxon>
        <taxon>Eutheria</taxon>
        <taxon>Euarchontoglires</taxon>
        <taxon>Primates</taxon>
        <taxon>Haplorrhini</taxon>
        <taxon>Catarrhini</taxon>
        <taxon>Cercopithecidae</taxon>
        <taxon>Cercopithecinae</taxon>
        <taxon>Macaca</taxon>
    </lineage>
</organism>
<gene>
    <name type="primary">GALNT9</name>
    <name type="ORF">QnpA-13140</name>
</gene>
<protein>
    <recommendedName>
        <fullName>Polypeptide N-acetylgalactosaminyltransferase 9</fullName>
        <ecNumber evidence="2">2.4.1.41</ecNumber>
    </recommendedName>
    <alternativeName>
        <fullName>Polypeptide GalNAc transferase 9</fullName>
        <shortName>GalNAc-T9</shortName>
        <shortName>pp-GaNTase 9</shortName>
    </alternativeName>
    <alternativeName>
        <fullName>Protein-UDP acetylgalactosaminyltransferase 9</fullName>
    </alternativeName>
    <alternativeName>
        <fullName>UDP-GalNAc:polypeptide N-acetylgalactosaminyltransferase 9</fullName>
    </alternativeName>
</protein>
<dbReference type="EC" id="2.4.1.41" evidence="2"/>
<dbReference type="EMBL" id="AB050509">
    <property type="protein sequence ID" value="BAB17277.1"/>
    <property type="molecule type" value="mRNA"/>
</dbReference>
<dbReference type="RefSeq" id="NP_001306356.1">
    <property type="nucleotide sequence ID" value="NM_001319427.1"/>
</dbReference>
<dbReference type="SMR" id="Q9GM01"/>
<dbReference type="STRING" id="9541.ENSMFAP00000003807"/>
<dbReference type="CAZy" id="CBM13">
    <property type="family name" value="Carbohydrate-Binding Module Family 13"/>
</dbReference>
<dbReference type="CAZy" id="GT27">
    <property type="family name" value="Glycosyltransferase Family 27"/>
</dbReference>
<dbReference type="GlyCosmos" id="Q9GM01">
    <property type="glycosylation" value="1 site, No reported glycans"/>
</dbReference>
<dbReference type="eggNOG" id="KOG3736">
    <property type="taxonomic scope" value="Eukaryota"/>
</dbReference>
<dbReference type="UniPathway" id="UPA00378"/>
<dbReference type="Proteomes" id="UP000233100">
    <property type="component" value="Unplaced"/>
</dbReference>
<dbReference type="GO" id="GO:0000139">
    <property type="term" value="C:Golgi membrane"/>
    <property type="evidence" value="ECO:0007669"/>
    <property type="project" value="UniProtKB-SubCell"/>
</dbReference>
<dbReference type="GO" id="GO:0030246">
    <property type="term" value="F:carbohydrate binding"/>
    <property type="evidence" value="ECO:0007669"/>
    <property type="project" value="UniProtKB-KW"/>
</dbReference>
<dbReference type="GO" id="GO:0046872">
    <property type="term" value="F:metal ion binding"/>
    <property type="evidence" value="ECO:0007669"/>
    <property type="project" value="UniProtKB-KW"/>
</dbReference>
<dbReference type="GO" id="GO:0004653">
    <property type="term" value="F:polypeptide N-acetylgalactosaminyltransferase activity"/>
    <property type="evidence" value="ECO:0007669"/>
    <property type="project" value="UniProtKB-EC"/>
</dbReference>
<dbReference type="GO" id="GO:0006493">
    <property type="term" value="P:protein O-linked glycosylation"/>
    <property type="evidence" value="ECO:0007669"/>
    <property type="project" value="TreeGrafter"/>
</dbReference>
<dbReference type="CDD" id="cd23473">
    <property type="entry name" value="beta-trefoil_Ricin_GALNT9"/>
    <property type="match status" value="1"/>
</dbReference>
<dbReference type="CDD" id="cd02510">
    <property type="entry name" value="pp-GalNAc-T"/>
    <property type="match status" value="1"/>
</dbReference>
<dbReference type="FunFam" id="2.80.10.50:FF:000025">
    <property type="entry name" value="Polypeptide N-acetylgalactosaminyltransferase"/>
    <property type="match status" value="1"/>
</dbReference>
<dbReference type="FunFam" id="3.90.550.10:FF:000192">
    <property type="entry name" value="Polypeptide N-acetylgalactosaminyltransferase 9"/>
    <property type="match status" value="1"/>
</dbReference>
<dbReference type="FunFam" id="3.90.550.10:FF:000203">
    <property type="entry name" value="Polypeptide N-acetylgalactosaminyltransferase 9"/>
    <property type="match status" value="1"/>
</dbReference>
<dbReference type="Gene3D" id="2.80.10.50">
    <property type="match status" value="1"/>
</dbReference>
<dbReference type="Gene3D" id="3.90.550.10">
    <property type="entry name" value="Spore Coat Polysaccharide Biosynthesis Protein SpsA, Chain A"/>
    <property type="match status" value="1"/>
</dbReference>
<dbReference type="InterPro" id="IPR045885">
    <property type="entry name" value="GalNAc-T"/>
</dbReference>
<dbReference type="InterPro" id="IPR001173">
    <property type="entry name" value="Glyco_trans_2-like"/>
</dbReference>
<dbReference type="InterPro" id="IPR029044">
    <property type="entry name" value="Nucleotide-diphossugar_trans"/>
</dbReference>
<dbReference type="InterPro" id="IPR035992">
    <property type="entry name" value="Ricin_B-like_lectins"/>
</dbReference>
<dbReference type="InterPro" id="IPR000772">
    <property type="entry name" value="Ricin_B_lectin"/>
</dbReference>
<dbReference type="PANTHER" id="PTHR11675">
    <property type="entry name" value="N-ACETYLGALACTOSAMINYLTRANSFERASE"/>
    <property type="match status" value="1"/>
</dbReference>
<dbReference type="PANTHER" id="PTHR11675:SF28">
    <property type="entry name" value="POLYPEPTIDE N-ACETYLGALACTOSAMINYLTRANSFERASE 9"/>
    <property type="match status" value="1"/>
</dbReference>
<dbReference type="Pfam" id="PF00535">
    <property type="entry name" value="Glycos_transf_2"/>
    <property type="match status" value="1"/>
</dbReference>
<dbReference type="Pfam" id="PF00652">
    <property type="entry name" value="Ricin_B_lectin"/>
    <property type="match status" value="1"/>
</dbReference>
<dbReference type="SMART" id="SM00458">
    <property type="entry name" value="RICIN"/>
    <property type="match status" value="1"/>
</dbReference>
<dbReference type="SUPFAM" id="SSF53448">
    <property type="entry name" value="Nucleotide-diphospho-sugar transferases"/>
    <property type="match status" value="1"/>
</dbReference>
<dbReference type="SUPFAM" id="SSF50370">
    <property type="entry name" value="Ricin B-like lectins"/>
    <property type="match status" value="1"/>
</dbReference>
<dbReference type="PROSITE" id="PS50231">
    <property type="entry name" value="RICIN_B_LECTIN"/>
    <property type="match status" value="1"/>
</dbReference>
<proteinExistence type="evidence at transcript level"/>
<sequence length="606" mass="68318">MAVARKIRTLLTVNILVFVGIVLFSVYCRLQGRSQELVRPLSGGCRPRPATPAPGSPLRSGGPRAVVAGRAELVLKGQLPAEPCSPGRLMVPEAEAEAQGGLAATLRDDGQEAEGKYEEYGYNAQLSDRISLDRSIPDYRPRKCRHMSYAQDLPQVSVVFIFVNEALSVILRSVHSVVNHTPSQLLKEVILVDDNSDNVELKFNLDQYVNKRYPGLVKIVRNSRREGLIRARLQGWKAATAPVVGFFDAHVEFNTGWAEPALSRIREDRRRIVLPAIDNIKYSTFEVQQYANAAHGYNWGLWCMYIIPPQDWLDRGDESAPIRTPAMIGCSFVVDREYFGDIGLLDPGMEVYGGENVELGMRVWQCGGSMEVLPCSRVAHIERTRKPYNNDIDYYAKRNALRAAEVWMDDFKSHVYMAWNIPMTNPGVDFGDVSERLALRQRLKCRSFKWYLENVYPEMRIYNNTLTYGEVRNSKASGYCLDQGAEDGDRAILYPCHGMSSQLVRYSADGLLQLGPLGSTAFLPDSKCLVDDGRGRTPTLRKCEDVARPTQRLWDFTQSGPIVSRATGRCLEVEMSKDANFGLRLVVQRCSGQKWMIRNWIKHARH</sequence>
<comment type="function">
    <text evidence="2">Catalyzes the initial reaction in O-linked oligosaccharide biosynthesis, the transfer of an N-acetyl-D-galactosamine residue to a serine or threonine residue on the protein receptor. Does not glycosylate apomucin or SDC3.</text>
</comment>
<comment type="catalytic activity">
    <reaction evidence="2">
        <text>L-seryl-[protein] + UDP-N-acetyl-alpha-D-galactosamine = a 3-O-[N-acetyl-alpha-D-galactosaminyl]-L-seryl-[protein] + UDP + H(+)</text>
        <dbReference type="Rhea" id="RHEA:23956"/>
        <dbReference type="Rhea" id="RHEA-COMP:9863"/>
        <dbReference type="Rhea" id="RHEA-COMP:12788"/>
        <dbReference type="ChEBI" id="CHEBI:15378"/>
        <dbReference type="ChEBI" id="CHEBI:29999"/>
        <dbReference type="ChEBI" id="CHEBI:53604"/>
        <dbReference type="ChEBI" id="CHEBI:58223"/>
        <dbReference type="ChEBI" id="CHEBI:67138"/>
        <dbReference type="EC" id="2.4.1.41"/>
    </reaction>
</comment>
<comment type="catalytic activity">
    <reaction evidence="2">
        <text>L-threonyl-[protein] + UDP-N-acetyl-alpha-D-galactosamine = a 3-O-[N-acetyl-alpha-D-galactosaminyl]-L-threonyl-[protein] + UDP + H(+)</text>
        <dbReference type="Rhea" id="RHEA:52424"/>
        <dbReference type="Rhea" id="RHEA-COMP:11060"/>
        <dbReference type="Rhea" id="RHEA-COMP:11689"/>
        <dbReference type="ChEBI" id="CHEBI:15378"/>
        <dbReference type="ChEBI" id="CHEBI:30013"/>
        <dbReference type="ChEBI" id="CHEBI:58223"/>
        <dbReference type="ChEBI" id="CHEBI:67138"/>
        <dbReference type="ChEBI" id="CHEBI:87075"/>
        <dbReference type="EC" id="2.4.1.41"/>
    </reaction>
</comment>
<comment type="cofactor">
    <cofactor evidence="1">
        <name>Mn(2+)</name>
        <dbReference type="ChEBI" id="CHEBI:29035"/>
    </cofactor>
</comment>
<comment type="pathway">
    <text evidence="2">Protein modification; protein glycosylation.</text>
</comment>
<comment type="subcellular location">
    <subcellularLocation>
        <location evidence="1">Golgi apparatus membrane</location>
        <topology evidence="1">Single-pass type II membrane protein</topology>
    </subcellularLocation>
</comment>
<comment type="domain">
    <text evidence="1">There are two conserved domains in the glycosyltransferase region: the N-terminal domain (domain A, also called GT1 motif), which is probably involved in manganese coordination and substrate binding and the C-terminal domain (domain B, also called Gal/GalNAc-T motif), which is probably involved in catalytic reaction and UDP-Gal binding.</text>
</comment>
<comment type="domain">
    <text evidence="1">The ricin B-type lectin domain binds to GalNAc and contributes to the glycopeptide specificity.</text>
</comment>
<comment type="similarity">
    <text evidence="6">Belongs to the glycosyltransferase 2 family. GalNAc-T subfamily.</text>
</comment>
<accession>Q9GM01</accession>
<keyword id="KW-1015">Disulfide bond</keyword>
<keyword id="KW-0325">Glycoprotein</keyword>
<keyword id="KW-0328">Glycosyltransferase</keyword>
<keyword id="KW-0333">Golgi apparatus</keyword>
<keyword id="KW-0430">Lectin</keyword>
<keyword id="KW-0464">Manganese</keyword>
<keyword id="KW-0472">Membrane</keyword>
<keyword id="KW-0479">Metal-binding</keyword>
<keyword id="KW-1185">Reference proteome</keyword>
<keyword id="KW-0735">Signal-anchor</keyword>
<keyword id="KW-0808">Transferase</keyword>
<keyword id="KW-0812">Transmembrane</keyword>
<keyword id="KW-1133">Transmembrane helix</keyword>